<accession>P0CX79</accession>
<accession>D6VYF3</accession>
<accession>P11163</accession>
<accession>Q12268</accession>
<accession>Q6Q5K8</accession>
<accession>Q6Q5K9</accession>
<feature type="signal peptide" evidence="6">
    <location>
        <begin position="1"/>
        <end position="25"/>
    </location>
</feature>
<feature type="chain" id="PRO_0000410443" description="L-asparaginase 2-4">
    <location>
        <begin position="26"/>
        <end position="362"/>
    </location>
</feature>
<feature type="domain" description="Asparaginase/glutaminase" evidence="3">
    <location>
        <begin position="33"/>
        <end position="359"/>
    </location>
</feature>
<feature type="active site" description="O-isoaspartyl threonine intermediate" evidence="4 5">
    <location>
        <position position="43"/>
    </location>
</feature>
<feature type="binding site" evidence="1">
    <location>
        <position position="89"/>
    </location>
    <ligand>
        <name>substrate</name>
    </ligand>
</feature>
<feature type="binding site" evidence="1">
    <location>
        <begin position="122"/>
        <end position="123"/>
    </location>
    <ligand>
        <name>substrate</name>
    </ligand>
</feature>
<feature type="glycosylation site" description="N-linked (GlcNAc...) asparagine" evidence="2">
    <location>
        <position position="29"/>
    </location>
</feature>
<feature type="glycosylation site" description="N-linked (GlcNAc...) asparagine" evidence="2">
    <location>
        <position position="93"/>
    </location>
</feature>
<feature type="glycosylation site" description="N-linked (GlcNAc...) asparagine" evidence="2">
    <location>
        <position position="239"/>
    </location>
</feature>
<feature type="sequence variant" evidence="6">
    <location>
        <begin position="26"/>
        <end position="55"/>
    </location>
</feature>
<evidence type="ECO:0000250" key="1"/>
<evidence type="ECO:0000255" key="2"/>
<evidence type="ECO:0000255" key="3">
    <source>
        <dbReference type="PROSITE-ProRule" id="PRU01068"/>
    </source>
</evidence>
<evidence type="ECO:0000255" key="4">
    <source>
        <dbReference type="PROSITE-ProRule" id="PRU10099"/>
    </source>
</evidence>
<evidence type="ECO:0000255" key="5">
    <source>
        <dbReference type="PROSITE-ProRule" id="PRU10100"/>
    </source>
</evidence>
<evidence type="ECO:0000269" key="6">
    <source>
    </source>
</evidence>
<evidence type="ECO:0000269" key="7">
    <source>
    </source>
</evidence>
<evidence type="ECO:0000269" key="8">
    <source>
    </source>
</evidence>
<evidence type="ECO:0000269" key="9">
    <source>
    </source>
</evidence>
<evidence type="ECO:0000305" key="10"/>
<dbReference type="EC" id="3.5.1.1"/>
<dbReference type="EMBL" id="U51921">
    <property type="protein sequence ID" value="AAB67484.1"/>
    <property type="molecule type" value="Genomic_DNA"/>
</dbReference>
<dbReference type="EMBL" id="BK006945">
    <property type="protein sequence ID" value="DAA09481.1"/>
    <property type="molecule type" value="Genomic_DNA"/>
</dbReference>
<dbReference type="PIR" id="S68471">
    <property type="entry name" value="S68471"/>
</dbReference>
<dbReference type="RefSeq" id="NP_013261.1">
    <property type="nucleotide sequence ID" value="NM_001182047.1"/>
</dbReference>
<dbReference type="SMR" id="P0CX79"/>
<dbReference type="BioGRID" id="31426">
    <property type="interactions" value="3"/>
</dbReference>
<dbReference type="BioGRID" id="31428">
    <property type="interactions" value="39"/>
</dbReference>
<dbReference type="BioGRID" id="31431">
    <property type="interactions" value="61"/>
</dbReference>
<dbReference type="BioGRID" id="31433">
    <property type="interactions" value="31"/>
</dbReference>
<dbReference type="FunCoup" id="P0CX79">
    <property type="interactions" value="76"/>
</dbReference>
<dbReference type="IntAct" id="P0CX79">
    <property type="interactions" value="1"/>
</dbReference>
<dbReference type="MINT" id="P0CX79"/>
<dbReference type="GlyCosmos" id="P0CX79">
    <property type="glycosylation" value="3 sites, No reported glycans"/>
</dbReference>
<dbReference type="GlyGen" id="P0CX79">
    <property type="glycosylation" value="3 sites"/>
</dbReference>
<dbReference type="EnsemblFungi" id="YLR155C_mRNA">
    <property type="protein sequence ID" value="YLR155C"/>
    <property type="gene ID" value="YLR155C"/>
</dbReference>
<dbReference type="EnsemblFungi" id="YLR157C_mRNA">
    <property type="protein sequence ID" value="YLR157C"/>
    <property type="gene ID" value="YLR157C"/>
</dbReference>
<dbReference type="EnsemblFungi" id="YLR158C_mRNA">
    <property type="protein sequence ID" value="YLR158C"/>
    <property type="gene ID" value="YLR158C"/>
</dbReference>
<dbReference type="EnsemblFungi" id="YLR160C_mRNA">
    <property type="protein sequence ID" value="YLR160C"/>
    <property type="gene ID" value="YLR160C"/>
</dbReference>
<dbReference type="GeneID" id="850857"/>
<dbReference type="KEGG" id="sce:YLR155C"/>
<dbReference type="KEGG" id="sce:YLR157C"/>
<dbReference type="KEGG" id="sce:YLR158C"/>
<dbReference type="KEGG" id="sce:YLR160C"/>
<dbReference type="AGR" id="SGD:S000004150"/>
<dbReference type="SGD" id="S000004150">
    <property type="gene designation" value="ASP3-4"/>
</dbReference>
<dbReference type="VEuPathDB" id="FungiDB:YLR155C"/>
<dbReference type="VEuPathDB" id="FungiDB:YLR157C"/>
<dbReference type="VEuPathDB" id="FungiDB:YLR158C"/>
<dbReference type="VEuPathDB" id="FungiDB:YLR160C"/>
<dbReference type="HOGENOM" id="CLU_019134_1_1_1"/>
<dbReference type="InParanoid" id="P0CX79"/>
<dbReference type="OMA" id="TKTYGFH"/>
<dbReference type="OrthoDB" id="542841at2759"/>
<dbReference type="BioCyc" id="YEAST:YLR160C-MONOMER"/>
<dbReference type="PRO" id="PR:P0CX79"/>
<dbReference type="Proteomes" id="UP000002311">
    <property type="component" value="Chromosome XII"/>
</dbReference>
<dbReference type="RNAct" id="P0CX79">
    <property type="molecule type" value="protein"/>
</dbReference>
<dbReference type="ExpressionAtlas" id="P0CX79">
    <property type="expression patterns" value="baseline"/>
</dbReference>
<dbReference type="GO" id="GO:0071944">
    <property type="term" value="C:cell periphery"/>
    <property type="evidence" value="ECO:0007005"/>
    <property type="project" value="SGD"/>
</dbReference>
<dbReference type="GO" id="GO:0030287">
    <property type="term" value="C:cell wall-bounded periplasmic space"/>
    <property type="evidence" value="ECO:0000314"/>
    <property type="project" value="SGD"/>
</dbReference>
<dbReference type="GO" id="GO:0005576">
    <property type="term" value="C:extracellular region"/>
    <property type="evidence" value="ECO:0007669"/>
    <property type="project" value="UniProtKB-SubCell"/>
</dbReference>
<dbReference type="GO" id="GO:0042597">
    <property type="term" value="C:periplasmic space"/>
    <property type="evidence" value="ECO:0000318"/>
    <property type="project" value="GO_Central"/>
</dbReference>
<dbReference type="GO" id="GO:0004067">
    <property type="term" value="F:asparaginase activity"/>
    <property type="evidence" value="ECO:0000314"/>
    <property type="project" value="SGD"/>
</dbReference>
<dbReference type="GO" id="GO:0006530">
    <property type="term" value="P:asparagine catabolic process"/>
    <property type="evidence" value="ECO:0000314"/>
    <property type="project" value="SGD"/>
</dbReference>
<dbReference type="GO" id="GO:0006995">
    <property type="term" value="P:cellular response to nitrogen starvation"/>
    <property type="evidence" value="ECO:0000314"/>
    <property type="project" value="SGD"/>
</dbReference>
<dbReference type="CDD" id="cd08964">
    <property type="entry name" value="L-asparaginase_II"/>
    <property type="match status" value="1"/>
</dbReference>
<dbReference type="FunFam" id="3.40.50.1170:FF:000001">
    <property type="entry name" value="L-asparaginase 2"/>
    <property type="match status" value="1"/>
</dbReference>
<dbReference type="FunFam" id="3.40.50.40:FF:000006">
    <property type="entry name" value="L-asparaginase I"/>
    <property type="match status" value="1"/>
</dbReference>
<dbReference type="Gene3D" id="3.40.50.40">
    <property type="match status" value="1"/>
</dbReference>
<dbReference type="Gene3D" id="3.40.50.1170">
    <property type="entry name" value="L-asparaginase, N-terminal domain"/>
    <property type="match status" value="1"/>
</dbReference>
<dbReference type="InterPro" id="IPR004550">
    <property type="entry name" value="AsnASE_II"/>
</dbReference>
<dbReference type="InterPro" id="IPR036152">
    <property type="entry name" value="Asp/glu_Ase-like_sf"/>
</dbReference>
<dbReference type="InterPro" id="IPR006034">
    <property type="entry name" value="Asparaginase/glutaminase-like"/>
</dbReference>
<dbReference type="InterPro" id="IPR020827">
    <property type="entry name" value="Asparaginase/glutaminase_AS1"/>
</dbReference>
<dbReference type="InterPro" id="IPR027475">
    <property type="entry name" value="Asparaginase/glutaminase_AS2"/>
</dbReference>
<dbReference type="InterPro" id="IPR040919">
    <property type="entry name" value="Asparaginase_C"/>
</dbReference>
<dbReference type="InterPro" id="IPR027473">
    <property type="entry name" value="L-asparaginase_C"/>
</dbReference>
<dbReference type="InterPro" id="IPR027474">
    <property type="entry name" value="L-asparaginase_N"/>
</dbReference>
<dbReference type="InterPro" id="IPR037152">
    <property type="entry name" value="L-asparaginase_N_sf"/>
</dbReference>
<dbReference type="NCBIfam" id="TIGR00520">
    <property type="entry name" value="asnASE_II"/>
    <property type="match status" value="1"/>
</dbReference>
<dbReference type="PANTHER" id="PTHR11707:SF28">
    <property type="entry name" value="60 KDA LYSOPHOSPHOLIPASE"/>
    <property type="match status" value="1"/>
</dbReference>
<dbReference type="PANTHER" id="PTHR11707">
    <property type="entry name" value="L-ASPARAGINASE"/>
    <property type="match status" value="1"/>
</dbReference>
<dbReference type="Pfam" id="PF00710">
    <property type="entry name" value="Asparaginase"/>
    <property type="match status" value="1"/>
</dbReference>
<dbReference type="Pfam" id="PF17763">
    <property type="entry name" value="Asparaginase_C"/>
    <property type="match status" value="1"/>
</dbReference>
<dbReference type="PIRSF" id="PIRSF001220">
    <property type="entry name" value="L-ASNase_gatD"/>
    <property type="match status" value="1"/>
</dbReference>
<dbReference type="PIRSF" id="PIRSF500176">
    <property type="entry name" value="L_ASNase"/>
    <property type="match status" value="1"/>
</dbReference>
<dbReference type="PRINTS" id="PR00139">
    <property type="entry name" value="ASNGLNASE"/>
</dbReference>
<dbReference type="SMART" id="SM00870">
    <property type="entry name" value="Asparaginase"/>
    <property type="match status" value="1"/>
</dbReference>
<dbReference type="SUPFAM" id="SSF53774">
    <property type="entry name" value="Glutaminase/Asparaginase"/>
    <property type="match status" value="1"/>
</dbReference>
<dbReference type="PROSITE" id="PS00144">
    <property type="entry name" value="ASN_GLN_ASE_1"/>
    <property type="match status" value="1"/>
</dbReference>
<dbReference type="PROSITE" id="PS00917">
    <property type="entry name" value="ASN_GLN_ASE_2"/>
    <property type="match status" value="1"/>
</dbReference>
<dbReference type="PROSITE" id="PS51732">
    <property type="entry name" value="ASN_GLN_ASE_3"/>
    <property type="match status" value="1"/>
</dbReference>
<comment type="catalytic activity">
    <reaction>
        <text>L-asparagine + H2O = L-aspartate + NH4(+)</text>
        <dbReference type="Rhea" id="RHEA:21016"/>
        <dbReference type="ChEBI" id="CHEBI:15377"/>
        <dbReference type="ChEBI" id="CHEBI:28938"/>
        <dbReference type="ChEBI" id="CHEBI:29991"/>
        <dbReference type="ChEBI" id="CHEBI:58048"/>
        <dbReference type="EC" id="3.5.1.1"/>
    </reaction>
</comment>
<comment type="biophysicochemical properties">
    <kinetics>
        <KM evidence="7 8">0.27 mM for L-asparagine</KM>
        <KM evidence="7 8">0.27 mM for D-asparagine</KM>
        <KM evidence="7 8">0.27 mM for N-acetyl-L-asparagine</KM>
        <KM evidence="7 8">0.07 mM for N-carbamyl-L-asparagine</KM>
        <KM evidence="7 8">0.06 mM for N-isoleucyl-L-asparagine</KM>
        <KM evidence="7 8">0.06 mM for N-glycyl-L-asparagine</KM>
        <KM evidence="7 8">0.06 mM for N-valyl-L-asparagine</KM>
        <KM evidence="7 8">0.2 mM for N-methionyl-L-asparagine</KM>
        <KM evidence="7 8">0.4 mM for N-glycyl-D-asparagine</KM>
        <Vmax evidence="7 8">42.0 umol/min/mg enzyme for L-asparagine</Vmax>
        <Vmax evidence="7 8">60.0 umol/min/mg enzyme for D-asparagine</Vmax>
        <Vmax evidence="7 8">167.0 umol/min/mg enzyme for N-acetyl-L-asparagine</Vmax>
        <Vmax evidence="7 8">79.0 umol/min/mg enzyme for N-carbamyl-L-asparagine</Vmax>
        <Vmax evidence="7 8">67.0 umol/min/mg enzyme for N-isoleucyl-L-asparagine</Vmax>
        <Vmax evidence="7 8">135.0 umol/min/mg enzyme for N-glycyl-L-asparagine</Vmax>
        <Vmax evidence="7 8">56.0 umol/min/mg enzyme for N-valyl-L-asparagine</Vmax>
        <Vmax evidence="7 8">92.0 umol/min/mg enzyme for N-methionyl-L-asparagine</Vmax>
        <Vmax evidence="7 8">8.0 umol/min/mg enzyme for N-glycyl-D-asparagine</Vmax>
        <text>Does not act on isoasparagine, L-aspartate diamide, beta-alanine amide and L-glutamine.</text>
    </kinetics>
    <phDependence>
        <text evidence="7 8">Optimum pH is 6.8. Active from pH 5.5 to pH 7.5. Stable from pH 3.5 to pH 10.5.</text>
    </phDependence>
</comment>
<comment type="subcellular location">
    <subcellularLocation>
        <location>Secreted</location>
    </subcellularLocation>
    <subcellularLocation>
        <location>Periplasm</location>
    </subcellularLocation>
</comment>
<comment type="induction">
    <text evidence="9">Subject to nitrogen catabolite repression (NCR). Not found in cells grown on rich nitrogen sources like ammonia, glutamine or glutamate, but is found in cells that have been subjected to nitrogen starvation or have been grown on a poor nitrogen source such as proline.</text>
</comment>
<comment type="miscellaneous">
    <text>Yeast contains 2 L-asparaginase isoenzymes: cytoplasmic L-asparaginase I, and cell wall L-asparaginase II.</text>
</comment>
<comment type="miscellaneous">
    <text>There are 4 copies for L-asparaginase 2 in yeast. The 4 identical copies ASP3-1, ASP3-2, ASP3-3 and ASP3-4 are arranged in tandem repeats located near a ribosomal DNA cluster.</text>
</comment>
<comment type="similarity">
    <text evidence="10">Belongs to the asparaginase 1 family.</text>
</comment>
<reference key="1">
    <citation type="journal article" date="1988" name="J. Biol. Chem.">
        <title>Asparaginase II of Saccharomyces cerevisiae. Characterization of the ASP3 gene.</title>
        <authorList>
            <person name="Kim K.-W."/>
            <person name="Kamerud J.Q."/>
            <person name="Livingston D.M."/>
            <person name="Roon R.J."/>
        </authorList>
    </citation>
    <scope>NUCLEOTIDE SEQUENCE [GENOMIC DNA]</scope>
    <scope>PROTEIN SEQUENCE OF 26-41 AND 56-71</scope>
    <scope>VARIANT 26-GLU--ALA-55 DEL</scope>
</reference>
<reference key="2">
    <citation type="journal article" date="1997" name="Nature">
        <title>The nucleotide sequence of Saccharomyces cerevisiae chromosome XII.</title>
        <authorList>
            <person name="Johnston M."/>
            <person name="Hillier L.W."/>
            <person name="Riles L."/>
            <person name="Albermann K."/>
            <person name="Andre B."/>
            <person name="Ansorge W."/>
            <person name="Benes V."/>
            <person name="Brueckner M."/>
            <person name="Delius H."/>
            <person name="Dubois E."/>
            <person name="Duesterhoeft A."/>
            <person name="Entian K.-D."/>
            <person name="Floeth M."/>
            <person name="Goffeau A."/>
            <person name="Hebling U."/>
            <person name="Heumann K."/>
            <person name="Heuss-Neitzel D."/>
            <person name="Hilbert H."/>
            <person name="Hilger F."/>
            <person name="Kleine K."/>
            <person name="Koetter P."/>
            <person name="Louis E.J."/>
            <person name="Messenguy F."/>
            <person name="Mewes H.-W."/>
            <person name="Miosga T."/>
            <person name="Moestl D."/>
            <person name="Mueller-Auer S."/>
            <person name="Nentwich U."/>
            <person name="Obermaier B."/>
            <person name="Piravandi E."/>
            <person name="Pohl T.M."/>
            <person name="Portetelle D."/>
            <person name="Purnelle B."/>
            <person name="Rechmann S."/>
            <person name="Rieger M."/>
            <person name="Rinke M."/>
            <person name="Rose M."/>
            <person name="Scharfe M."/>
            <person name="Scherens B."/>
            <person name="Scholler P."/>
            <person name="Schwager C."/>
            <person name="Schwarz S."/>
            <person name="Underwood A.P."/>
            <person name="Urrestarazu L.A."/>
            <person name="Vandenbol M."/>
            <person name="Verhasselt P."/>
            <person name="Vierendeels F."/>
            <person name="Voet M."/>
            <person name="Volckaert G."/>
            <person name="Voss H."/>
            <person name="Wambutt R."/>
            <person name="Wedler E."/>
            <person name="Wedler H."/>
            <person name="Zimmermann F.K."/>
            <person name="Zollner A."/>
            <person name="Hani J."/>
            <person name="Hoheisel J.D."/>
        </authorList>
    </citation>
    <scope>NUCLEOTIDE SEQUENCE [LARGE SCALE GENOMIC DNA]</scope>
    <source>
        <strain>ATCC 204508 / S288c</strain>
    </source>
</reference>
<reference key="3">
    <citation type="journal article" date="2014" name="G3 (Bethesda)">
        <title>The reference genome sequence of Saccharomyces cerevisiae: Then and now.</title>
        <authorList>
            <person name="Engel S.R."/>
            <person name="Dietrich F.S."/>
            <person name="Fisk D.G."/>
            <person name="Binkley G."/>
            <person name="Balakrishnan R."/>
            <person name="Costanzo M.C."/>
            <person name="Dwight S.S."/>
            <person name="Hitz B.C."/>
            <person name="Karra K."/>
            <person name="Nash R.S."/>
            <person name="Weng S."/>
            <person name="Wong E.D."/>
            <person name="Lloyd P."/>
            <person name="Skrzypek M.S."/>
            <person name="Miyasato S.R."/>
            <person name="Simison M."/>
            <person name="Cherry J.M."/>
        </authorList>
    </citation>
    <scope>GENOME REANNOTATION</scope>
    <source>
        <strain>ATCC 204508 / S288c</strain>
    </source>
</reference>
<reference key="4">
    <citation type="journal article" date="1978" name="J. Biol. Chem.">
        <title>Characterization of two forms of asparaginase in Saccharomyces cerevisiae.</title>
        <authorList>
            <person name="Dunlop P.C."/>
            <person name="Meyer G.M."/>
            <person name="Ban D."/>
            <person name="Roon R.J."/>
        </authorList>
    </citation>
    <scope>BIOPHYSICOCHEMICAL PROPERTIES</scope>
</reference>
<reference key="5">
    <citation type="journal article" date="1980" name="J. Bacteriol.">
        <title>Nitrogen catabolite repression of asparaginase II in Saccharomyces cerevisiae.</title>
        <authorList>
            <person name="Dunlop P.C."/>
            <person name="Meyer G.M."/>
            <person name="Roon R.J."/>
        </authorList>
    </citation>
    <scope>INDUCTION</scope>
</reference>
<reference key="6">
    <citation type="journal article" date="1980" name="J. Biol. Chem.">
        <title>Reactions of asparaginase II of Saccharomyces cerevisiae. A mechanistic analysis of hydrolysis and hydroxylaminolysis.</title>
        <authorList>
            <person name="Dunlop P.C."/>
            <person name="Meyer G.M."/>
            <person name="Roon R.J."/>
        </authorList>
    </citation>
    <scope>BIOPHYSICOCHEMICAL PROPERTIES</scope>
</reference>
<name>ASP24_YEAST</name>
<gene>
    <name type="primary">ASP3-4</name>
    <name type="ordered locus">YLR160C</name>
    <name type="ORF">L9632.9</name>
</gene>
<sequence length="362" mass="38687">MRSLNTLLLSLFVAMSSGAPLLKIREEKNSSLPSIKIFGTGGTIASKGSTSATTAGYSVGLTVNDLIEAVPSLAEKANLDYLQVSNVGSNSLNYTHLIPLYHGISEALASDDYAGAVVTHGTDTMEETAFFLDLTINSEKPVCIAGAMRPATATSADGPMNLYQAVSIAASEKSLGRGTMITLNDRIASGFWTTKMNANSLDTFRADEQGYLGYFSNDDVEFYYPPVKPNGWQFFDISNLTDPSEIPEVIILYSYQGLNPELIVKAVKDLGAKGIVLAGSGAGSWTATGSIVNEQLYEEYGIPIVHSRRTADGTVPPDDAPEYAIGSGYLNPQKSRILLQLCLYSGYGMDQIRSVFSGVYGG</sequence>
<keyword id="KW-0903">Direct protein sequencing</keyword>
<keyword id="KW-0325">Glycoprotein</keyword>
<keyword id="KW-0378">Hydrolase</keyword>
<keyword id="KW-0574">Periplasm</keyword>
<keyword id="KW-1185">Reference proteome</keyword>
<keyword id="KW-0964">Secreted</keyword>
<keyword id="KW-0732">Signal</keyword>
<protein>
    <recommendedName>
        <fullName>L-asparaginase 2-4</fullName>
        <ecNumber>3.5.1.1</ecNumber>
    </recommendedName>
    <alternativeName>
        <fullName>L-asparaginase II</fullName>
    </alternativeName>
    <alternativeName>
        <fullName>L-asparagine amidohydrolase II</fullName>
        <shortName>ASP II</shortName>
    </alternativeName>
</protein>
<proteinExistence type="evidence at protein level"/>
<organism>
    <name type="scientific">Saccharomyces cerevisiae (strain ATCC 204508 / S288c)</name>
    <name type="common">Baker's yeast</name>
    <dbReference type="NCBI Taxonomy" id="559292"/>
    <lineage>
        <taxon>Eukaryota</taxon>
        <taxon>Fungi</taxon>
        <taxon>Dikarya</taxon>
        <taxon>Ascomycota</taxon>
        <taxon>Saccharomycotina</taxon>
        <taxon>Saccharomycetes</taxon>
        <taxon>Saccharomycetales</taxon>
        <taxon>Saccharomycetaceae</taxon>
        <taxon>Saccharomyces</taxon>
    </lineage>
</organism>